<reference key="1">
    <citation type="journal article" date="2001" name="Appl. Environ. Microbiol.">
        <title>Map of the IncP1beta plasmid pTSA encoding the widespread genes (tsa) for p-toluenesulfonate degradation in Comamonas testosteroni T-2.</title>
        <authorList>
            <person name="Tralau T."/>
            <person name="Cook A.M."/>
            <person name="Ruff J."/>
        </authorList>
    </citation>
    <scope>NUCLEOTIDE SEQUENCE [GENOMIC DNA]</scope>
    <scope>LACK OF EXPRESSION</scope>
    <source>
        <strain>DSM 6577 / T-2</strain>
    </source>
</reference>
<reference key="2">
    <citation type="journal article" date="2004" name="Biochem. J.">
        <title>A novel outer-membrane anion channel (porin) as part of a putatively two-component transport system for 4-toluenesulphonate in Comamonas testosteroni T-2.</title>
        <authorList>
            <person name="Mampel J."/>
            <person name="Maier E."/>
            <person name="Tralau T."/>
            <person name="Ruff J."/>
            <person name="Benz R."/>
            <person name="Cook A.M."/>
        </authorList>
    </citation>
    <scope>NUCLEOTIDE SEQUENCE [GENOMIC DNA]</scope>
    <source>
        <strain>DSM 6577 / T-2</strain>
    </source>
</reference>
<organism>
    <name type="scientific">Comamonas testosteroni</name>
    <name type="common">Pseudomonas testosteroni</name>
    <dbReference type="NCBI Taxonomy" id="285"/>
    <lineage>
        <taxon>Bacteria</taxon>
        <taxon>Pseudomonadati</taxon>
        <taxon>Pseudomonadota</taxon>
        <taxon>Betaproteobacteria</taxon>
        <taxon>Burkholderiales</taxon>
        <taxon>Comamonadaceae</taxon>
        <taxon>Comamonas</taxon>
    </lineage>
</organism>
<accession>Q9AHG2</accession>
<comment type="function">
    <text evidence="1">Involved in the toluene-4-sulfonate degradation pathway.</text>
</comment>
<comment type="cofactor">
    <cofactor evidence="1">
        <name>FMN</name>
        <dbReference type="ChEBI" id="CHEBI:58210"/>
    </cofactor>
</comment>
<comment type="subunit">
    <text>Monomer. Part of the p-toluenesulfonate methyl-monooxygenase complex TsaBM, comprising the reductase TsaB and the oxygenase TsaM.</text>
</comment>
<comment type="caution">
    <text evidence="4">Could be the product of a pseudogene. Probably not expressed, due to the absence of promoter-like sequences upstream of the operon tsaMBCD2 (PubMed:11282598).</text>
</comment>
<evidence type="ECO:0000250" key="1"/>
<evidence type="ECO:0000255" key="2">
    <source>
        <dbReference type="PROSITE-ProRule" id="PRU00465"/>
    </source>
</evidence>
<evidence type="ECO:0000255" key="3">
    <source>
        <dbReference type="PROSITE-ProRule" id="PRU00716"/>
    </source>
</evidence>
<evidence type="ECO:0000305" key="4">
    <source>
    </source>
</evidence>
<feature type="chain" id="PRO_0000419122" description="Putative toluene-4-sulfonate monooxygenase system reductase subunit TsaB2">
    <location>
        <begin position="1"/>
        <end position="317"/>
    </location>
</feature>
<feature type="domain" description="FAD-binding FR-type" evidence="3">
    <location>
        <begin position="4"/>
        <end position="106"/>
    </location>
</feature>
<feature type="domain" description="2Fe-2S ferredoxin-type" evidence="2">
    <location>
        <begin position="232"/>
        <end position="317"/>
    </location>
</feature>
<feature type="binding site" evidence="1">
    <location>
        <begin position="110"/>
        <end position="220"/>
    </location>
    <ligand>
        <name>NAD(+)</name>
        <dbReference type="ChEBI" id="CHEBI:57540"/>
    </ligand>
</feature>
<feature type="binding site" evidence="2">
    <location>
        <position position="266"/>
    </location>
    <ligand>
        <name>[2Fe-2S] cluster</name>
        <dbReference type="ChEBI" id="CHEBI:190135"/>
    </ligand>
</feature>
<feature type="binding site" evidence="2">
    <location>
        <position position="271"/>
    </location>
    <ligand>
        <name>[2Fe-2S] cluster</name>
        <dbReference type="ChEBI" id="CHEBI:190135"/>
    </ligand>
</feature>
<feature type="binding site" evidence="2">
    <location>
        <position position="274"/>
    </location>
    <ligand>
        <name>[2Fe-2S] cluster</name>
        <dbReference type="ChEBI" id="CHEBI:190135"/>
    </ligand>
</feature>
<name>TSAB2_COMTE</name>
<dbReference type="EC" id="1.5.1.-"/>
<dbReference type="EMBL" id="AH010657">
    <property type="protein sequence ID" value="AAK37997.1"/>
    <property type="molecule type" value="Genomic_DNA"/>
</dbReference>
<dbReference type="SMR" id="Q9AHG2"/>
<dbReference type="GO" id="GO:0051537">
    <property type="term" value="F:2 iron, 2 sulfur cluster binding"/>
    <property type="evidence" value="ECO:0007669"/>
    <property type="project" value="UniProtKB-KW"/>
</dbReference>
<dbReference type="GO" id="GO:0046872">
    <property type="term" value="F:metal ion binding"/>
    <property type="evidence" value="ECO:0007669"/>
    <property type="project" value="UniProtKB-KW"/>
</dbReference>
<dbReference type="GO" id="GO:0004497">
    <property type="term" value="F:monooxygenase activity"/>
    <property type="evidence" value="ECO:0007669"/>
    <property type="project" value="UniProtKB-KW"/>
</dbReference>
<dbReference type="GO" id="GO:0009056">
    <property type="term" value="P:catabolic process"/>
    <property type="evidence" value="ECO:0007669"/>
    <property type="project" value="UniProtKB-KW"/>
</dbReference>
<dbReference type="CDD" id="cd00207">
    <property type="entry name" value="fer2"/>
    <property type="match status" value="1"/>
</dbReference>
<dbReference type="CDD" id="cd06185">
    <property type="entry name" value="PDR_like"/>
    <property type="match status" value="1"/>
</dbReference>
<dbReference type="Gene3D" id="3.10.20.30">
    <property type="match status" value="1"/>
</dbReference>
<dbReference type="Gene3D" id="3.40.50.80">
    <property type="entry name" value="Nucleotide-binding domain of ferredoxin-NADP reductase (FNR) module"/>
    <property type="match status" value="1"/>
</dbReference>
<dbReference type="Gene3D" id="2.40.30.10">
    <property type="entry name" value="Translation factors"/>
    <property type="match status" value="1"/>
</dbReference>
<dbReference type="InterPro" id="IPR036010">
    <property type="entry name" value="2Fe-2S_ferredoxin-like_sf"/>
</dbReference>
<dbReference type="InterPro" id="IPR001041">
    <property type="entry name" value="2Fe-2S_ferredoxin-type"/>
</dbReference>
<dbReference type="InterPro" id="IPR006058">
    <property type="entry name" value="2Fe2S_fd_BS"/>
</dbReference>
<dbReference type="InterPro" id="IPR012675">
    <property type="entry name" value="Beta-grasp_dom_sf"/>
</dbReference>
<dbReference type="InterPro" id="IPR017927">
    <property type="entry name" value="FAD-bd_FR_type"/>
</dbReference>
<dbReference type="InterPro" id="IPR039261">
    <property type="entry name" value="FNR_nucleotide-bd"/>
</dbReference>
<dbReference type="InterPro" id="IPR050415">
    <property type="entry name" value="MRET"/>
</dbReference>
<dbReference type="InterPro" id="IPR001433">
    <property type="entry name" value="OxRdtase_FAD/NAD-bd"/>
</dbReference>
<dbReference type="InterPro" id="IPR017938">
    <property type="entry name" value="Riboflavin_synthase-like_b-brl"/>
</dbReference>
<dbReference type="PANTHER" id="PTHR47354:SF1">
    <property type="entry name" value="CARNITINE MONOOXYGENASE REDUCTASE SUBUNIT"/>
    <property type="match status" value="1"/>
</dbReference>
<dbReference type="PANTHER" id="PTHR47354">
    <property type="entry name" value="NADH OXIDOREDUCTASE HCR"/>
    <property type="match status" value="1"/>
</dbReference>
<dbReference type="Pfam" id="PF00111">
    <property type="entry name" value="Fer2"/>
    <property type="match status" value="1"/>
</dbReference>
<dbReference type="Pfam" id="PF00175">
    <property type="entry name" value="NAD_binding_1"/>
    <property type="match status" value="1"/>
</dbReference>
<dbReference type="PRINTS" id="PR00409">
    <property type="entry name" value="PHDIOXRDTASE"/>
</dbReference>
<dbReference type="SUPFAM" id="SSF54292">
    <property type="entry name" value="2Fe-2S ferredoxin-like"/>
    <property type="match status" value="1"/>
</dbReference>
<dbReference type="SUPFAM" id="SSF52343">
    <property type="entry name" value="Ferredoxin reductase-like, C-terminal NADP-linked domain"/>
    <property type="match status" value="1"/>
</dbReference>
<dbReference type="SUPFAM" id="SSF63380">
    <property type="entry name" value="Riboflavin synthase domain-like"/>
    <property type="match status" value="1"/>
</dbReference>
<dbReference type="PROSITE" id="PS00197">
    <property type="entry name" value="2FE2S_FER_1"/>
    <property type="match status" value="1"/>
</dbReference>
<dbReference type="PROSITE" id="PS51085">
    <property type="entry name" value="2FE2S_FER_2"/>
    <property type="match status" value="1"/>
</dbReference>
<dbReference type="PROSITE" id="PS51384">
    <property type="entry name" value="FAD_FR"/>
    <property type="match status" value="1"/>
</dbReference>
<protein>
    <recommendedName>
        <fullName>Putative toluene-4-sulfonate monooxygenase system reductase subunit TsaB2</fullName>
        <ecNumber>1.5.1.-</ecNumber>
    </recommendedName>
    <alternativeName>
        <fullName>Toluenesulfonate methyl-monooxygenase reductase component TsaB2</fullName>
    </alternativeName>
</protein>
<geneLocation type="plasmid">
    <name>pTSA</name>
</geneLocation>
<gene>
    <name type="primary">tsaB2</name>
</gene>
<keyword id="KW-0001">2Fe-2S</keyword>
<keyword id="KW-0058">Aromatic hydrocarbons catabolism</keyword>
<keyword id="KW-0249">Electron transport</keyword>
<keyword id="KW-0285">Flavoprotein</keyword>
<keyword id="KW-0288">FMN</keyword>
<keyword id="KW-0408">Iron</keyword>
<keyword id="KW-0411">Iron-sulfur</keyword>
<keyword id="KW-0479">Metal-binding</keyword>
<keyword id="KW-0503">Monooxygenase</keyword>
<keyword id="KW-0520">NAD</keyword>
<keyword id="KW-0560">Oxidoreductase</keyword>
<keyword id="KW-0614">Plasmid</keyword>
<keyword id="KW-0813">Transport</keyword>
<proteinExistence type="uncertain"/>
<sequence length="317" mass="34215">MSADVPVTVAAVRAVARDVLALELRHANGQPLPGASAGAHIDLALPNGLVRQYSLVNATGQATMDCYQVAVGWDANSRGGSVWIHEKLKVGQALRVSAPRNLFEMAPEHRRVLLLAGGIGVTPIYAMAQACAQQGVDVELWASARSAPRLAYLEELKALLGQRLHLHADDEQGGPMNLTERLATQRWDAVYACGPAPMLDALTAATAHWAPGSVRMERFKGAEQPASERQPFELVLQRAGLSTTVDAHESVLDAMERVGVDFPWSCREGICGTCEAPVLEGEVQHLDYVLSPEERAEQRRMMVCVSRCGGGRLVLDI</sequence>